<organism>
    <name type="scientific">Trichormus variabilis (strain ATCC 29413 / PCC 7937)</name>
    <name type="common">Anabaena variabilis</name>
    <dbReference type="NCBI Taxonomy" id="240292"/>
    <lineage>
        <taxon>Bacteria</taxon>
        <taxon>Bacillati</taxon>
        <taxon>Cyanobacteriota</taxon>
        <taxon>Cyanophyceae</taxon>
        <taxon>Nostocales</taxon>
        <taxon>Nostocaceae</taxon>
        <taxon>Trichormus</taxon>
    </lineage>
</organism>
<dbReference type="EC" id="3.5.1.5" evidence="1"/>
<dbReference type="EMBL" id="CP000117">
    <property type="protein sequence ID" value="ABA23227.1"/>
    <property type="molecule type" value="Genomic_DNA"/>
</dbReference>
<dbReference type="SMR" id="Q3M709"/>
<dbReference type="STRING" id="240292.Ava_3621"/>
<dbReference type="KEGG" id="ava:Ava_3621"/>
<dbReference type="eggNOG" id="COG0831">
    <property type="taxonomic scope" value="Bacteria"/>
</dbReference>
<dbReference type="HOGENOM" id="CLU_145825_1_0_3"/>
<dbReference type="UniPathway" id="UPA00258">
    <property type="reaction ID" value="UER00370"/>
</dbReference>
<dbReference type="Proteomes" id="UP000002533">
    <property type="component" value="Chromosome"/>
</dbReference>
<dbReference type="GO" id="GO:0005737">
    <property type="term" value="C:cytoplasm"/>
    <property type="evidence" value="ECO:0007669"/>
    <property type="project" value="UniProtKB-SubCell"/>
</dbReference>
<dbReference type="GO" id="GO:0016151">
    <property type="term" value="F:nickel cation binding"/>
    <property type="evidence" value="ECO:0007669"/>
    <property type="project" value="InterPro"/>
</dbReference>
<dbReference type="GO" id="GO:0009039">
    <property type="term" value="F:urease activity"/>
    <property type="evidence" value="ECO:0007669"/>
    <property type="project" value="UniProtKB-UniRule"/>
</dbReference>
<dbReference type="GO" id="GO:0043419">
    <property type="term" value="P:urea catabolic process"/>
    <property type="evidence" value="ECO:0007669"/>
    <property type="project" value="UniProtKB-UniRule"/>
</dbReference>
<dbReference type="CDD" id="cd00390">
    <property type="entry name" value="Urease_gamma"/>
    <property type="match status" value="1"/>
</dbReference>
<dbReference type="Gene3D" id="3.30.280.10">
    <property type="entry name" value="Urease, gamma-like subunit"/>
    <property type="match status" value="1"/>
</dbReference>
<dbReference type="HAMAP" id="MF_00739">
    <property type="entry name" value="Urease_gamma"/>
    <property type="match status" value="1"/>
</dbReference>
<dbReference type="InterPro" id="IPR012010">
    <property type="entry name" value="Urease_gamma"/>
</dbReference>
<dbReference type="InterPro" id="IPR002026">
    <property type="entry name" value="Urease_gamma/gamma-beta_su"/>
</dbReference>
<dbReference type="InterPro" id="IPR036463">
    <property type="entry name" value="Urease_gamma_sf"/>
</dbReference>
<dbReference type="InterPro" id="IPR050069">
    <property type="entry name" value="Urease_subunit"/>
</dbReference>
<dbReference type="NCBIfam" id="NF009712">
    <property type="entry name" value="PRK13241.1"/>
    <property type="match status" value="1"/>
</dbReference>
<dbReference type="NCBIfam" id="TIGR00193">
    <property type="entry name" value="urease_gam"/>
    <property type="match status" value="1"/>
</dbReference>
<dbReference type="PANTHER" id="PTHR33569">
    <property type="entry name" value="UREASE"/>
    <property type="match status" value="1"/>
</dbReference>
<dbReference type="PANTHER" id="PTHR33569:SF1">
    <property type="entry name" value="UREASE"/>
    <property type="match status" value="1"/>
</dbReference>
<dbReference type="Pfam" id="PF00547">
    <property type="entry name" value="Urease_gamma"/>
    <property type="match status" value="1"/>
</dbReference>
<dbReference type="PIRSF" id="PIRSF001223">
    <property type="entry name" value="Urease_gamma"/>
    <property type="match status" value="1"/>
</dbReference>
<dbReference type="SUPFAM" id="SSF54111">
    <property type="entry name" value="Urease, gamma-subunit"/>
    <property type="match status" value="1"/>
</dbReference>
<accession>Q3M709</accession>
<evidence type="ECO:0000255" key="1">
    <source>
        <dbReference type="HAMAP-Rule" id="MF_00739"/>
    </source>
</evidence>
<keyword id="KW-0963">Cytoplasm</keyword>
<keyword id="KW-0378">Hydrolase</keyword>
<reference key="1">
    <citation type="journal article" date="2014" name="Stand. Genomic Sci.">
        <title>Complete genome sequence of Anabaena variabilis ATCC 29413.</title>
        <authorList>
            <person name="Thiel T."/>
            <person name="Pratte B.S."/>
            <person name="Zhong J."/>
            <person name="Goodwin L."/>
            <person name="Copeland A."/>
            <person name="Lucas S."/>
            <person name="Han C."/>
            <person name="Pitluck S."/>
            <person name="Land M.L."/>
            <person name="Kyrpides N.C."/>
            <person name="Woyke T."/>
        </authorList>
    </citation>
    <scope>NUCLEOTIDE SEQUENCE [LARGE SCALE GENOMIC DNA]</scope>
    <source>
        <strain>ATCC 29413 / PCC 7937</strain>
    </source>
</reference>
<gene>
    <name evidence="1" type="primary">ureA</name>
    <name type="ordered locus">Ava_3621</name>
</gene>
<name>URE3_TRIV2</name>
<comment type="catalytic activity">
    <reaction evidence="1">
        <text>urea + 2 H2O + H(+) = hydrogencarbonate + 2 NH4(+)</text>
        <dbReference type="Rhea" id="RHEA:20557"/>
        <dbReference type="ChEBI" id="CHEBI:15377"/>
        <dbReference type="ChEBI" id="CHEBI:15378"/>
        <dbReference type="ChEBI" id="CHEBI:16199"/>
        <dbReference type="ChEBI" id="CHEBI:17544"/>
        <dbReference type="ChEBI" id="CHEBI:28938"/>
        <dbReference type="EC" id="3.5.1.5"/>
    </reaction>
</comment>
<comment type="pathway">
    <text evidence="1">Nitrogen metabolism; urea degradation; CO(2) and NH(3) from urea (urease route): step 1/1.</text>
</comment>
<comment type="subunit">
    <text evidence="1">Heterotrimer of UreA (gamma), UreB (beta) and UreC (alpha) subunits. Three heterotrimers associate to form the active enzyme.</text>
</comment>
<comment type="subcellular location">
    <subcellularLocation>
        <location evidence="1">Cytoplasm</location>
    </subcellularLocation>
</comment>
<comment type="similarity">
    <text evidence="1">Belongs to the urease gamma subunit family.</text>
</comment>
<sequence length="100" mass="11057">MQLTPQEKDKLLIFTAALVAERRKNRGLKLNYPEAVAYISAAILEGARDGNTVAELMSYGTTLLTRDDVMEGIAEMVHEVQVEATFPDGTKLVTVHNPIR</sequence>
<feature type="chain" id="PRO_0000234198" description="Urease subunit gamma">
    <location>
        <begin position="1"/>
        <end position="100"/>
    </location>
</feature>
<proteinExistence type="inferred from homology"/>
<protein>
    <recommendedName>
        <fullName evidence="1">Urease subunit gamma</fullName>
        <ecNumber evidence="1">3.5.1.5</ecNumber>
    </recommendedName>
    <alternativeName>
        <fullName evidence="1">Urea amidohydrolase subunit gamma</fullName>
    </alternativeName>
</protein>